<name>RF1_STRZT</name>
<dbReference type="EMBL" id="CP000921">
    <property type="protein sequence ID" value="ACO22836.1"/>
    <property type="molecule type" value="Genomic_DNA"/>
</dbReference>
<dbReference type="RefSeq" id="WP_001028798.1">
    <property type="nucleotide sequence ID" value="NC_012469.1"/>
</dbReference>
<dbReference type="SMR" id="C1CRE0"/>
<dbReference type="KEGG" id="snt:SPT_1072"/>
<dbReference type="HOGENOM" id="CLU_036856_0_1_9"/>
<dbReference type="GO" id="GO:0005737">
    <property type="term" value="C:cytoplasm"/>
    <property type="evidence" value="ECO:0007669"/>
    <property type="project" value="UniProtKB-SubCell"/>
</dbReference>
<dbReference type="GO" id="GO:0016149">
    <property type="term" value="F:translation release factor activity, codon specific"/>
    <property type="evidence" value="ECO:0007669"/>
    <property type="project" value="UniProtKB-UniRule"/>
</dbReference>
<dbReference type="FunFam" id="3.30.160.20:FF:000027">
    <property type="entry name" value="Peptide chain release factor 1"/>
    <property type="match status" value="1"/>
</dbReference>
<dbReference type="FunFam" id="3.30.70.1660:FF:000002">
    <property type="entry name" value="Peptide chain release factor 1"/>
    <property type="match status" value="1"/>
</dbReference>
<dbReference type="FunFam" id="3.30.70.1660:FF:000004">
    <property type="entry name" value="Peptide chain release factor 1"/>
    <property type="match status" value="1"/>
</dbReference>
<dbReference type="Gene3D" id="3.30.160.20">
    <property type="match status" value="1"/>
</dbReference>
<dbReference type="Gene3D" id="3.30.70.1660">
    <property type="match status" value="1"/>
</dbReference>
<dbReference type="Gene3D" id="6.10.140.1950">
    <property type="match status" value="1"/>
</dbReference>
<dbReference type="HAMAP" id="MF_00093">
    <property type="entry name" value="Rel_fac_1"/>
    <property type="match status" value="1"/>
</dbReference>
<dbReference type="InterPro" id="IPR005139">
    <property type="entry name" value="PCRF"/>
</dbReference>
<dbReference type="InterPro" id="IPR000352">
    <property type="entry name" value="Pep_chain_release_fac_I"/>
</dbReference>
<dbReference type="InterPro" id="IPR045853">
    <property type="entry name" value="Pep_chain_release_fac_I_sf"/>
</dbReference>
<dbReference type="InterPro" id="IPR050057">
    <property type="entry name" value="Prokaryotic/Mito_RF"/>
</dbReference>
<dbReference type="InterPro" id="IPR004373">
    <property type="entry name" value="RF-1"/>
</dbReference>
<dbReference type="NCBIfam" id="TIGR00019">
    <property type="entry name" value="prfA"/>
    <property type="match status" value="1"/>
</dbReference>
<dbReference type="NCBIfam" id="NF001859">
    <property type="entry name" value="PRK00591.1"/>
    <property type="match status" value="1"/>
</dbReference>
<dbReference type="PANTHER" id="PTHR43804">
    <property type="entry name" value="LD18447P"/>
    <property type="match status" value="1"/>
</dbReference>
<dbReference type="PANTHER" id="PTHR43804:SF7">
    <property type="entry name" value="LD18447P"/>
    <property type="match status" value="1"/>
</dbReference>
<dbReference type="Pfam" id="PF03462">
    <property type="entry name" value="PCRF"/>
    <property type="match status" value="1"/>
</dbReference>
<dbReference type="Pfam" id="PF00472">
    <property type="entry name" value="RF-1"/>
    <property type="match status" value="1"/>
</dbReference>
<dbReference type="SMART" id="SM00937">
    <property type="entry name" value="PCRF"/>
    <property type="match status" value="1"/>
</dbReference>
<dbReference type="SUPFAM" id="SSF75620">
    <property type="entry name" value="Release factor"/>
    <property type="match status" value="1"/>
</dbReference>
<dbReference type="PROSITE" id="PS00745">
    <property type="entry name" value="RF_PROK_I"/>
    <property type="match status" value="1"/>
</dbReference>
<protein>
    <recommendedName>
        <fullName evidence="1">Peptide chain release factor 1</fullName>
        <shortName evidence="1">RF-1</shortName>
    </recommendedName>
</protein>
<comment type="function">
    <text evidence="1">Peptide chain release factor 1 directs the termination of translation in response to the peptide chain termination codons UAG and UAA.</text>
</comment>
<comment type="subcellular location">
    <subcellularLocation>
        <location evidence="1">Cytoplasm</location>
    </subcellularLocation>
</comment>
<comment type="PTM">
    <text evidence="1">Methylated by PrmC. Methylation increases the termination efficiency of RF1.</text>
</comment>
<comment type="similarity">
    <text evidence="1">Belongs to the prokaryotic/mitochondrial release factor family.</text>
</comment>
<gene>
    <name evidence="1" type="primary">prfA</name>
    <name type="ordered locus">SPT_1072</name>
</gene>
<accession>C1CRE0</accession>
<sequence length="359" mass="40646">MNIYDQLQAVEDRYEELGELLSDPDVVSDTKRFMELSKEEASNRDTVIAYREYKQVLQNIVDAEEMIKESGGDADLEEMAKQELKDAKAEKEEYEEKLKILLLPKDPNDDKNIILEIRGAAGGDEAALFAGDLLTMYQKYAEAQGWRFEVMEASMNGVGGFKEVVAMVSGQSVYSKLKYESGAHRVQRVPVTESQGRVHTSTATVLVMLEVEEVEYDIDPKDLRVDIYHASGAGGQNVNKVATAVRIVHLPTNIKVEMQEERTQQKNREKAMKIIRARVADHFAQIAQDEQDAERKSTIGTGDRSERIRTYNFPQNRVTDHRIGLTLQKLDTILSGKLDEVVDALVLYDQTQKLEELNK</sequence>
<reference key="1">
    <citation type="journal article" date="2010" name="Genome Biol.">
        <title>Structure and dynamics of the pan-genome of Streptococcus pneumoniae and closely related species.</title>
        <authorList>
            <person name="Donati C."/>
            <person name="Hiller N.L."/>
            <person name="Tettelin H."/>
            <person name="Muzzi A."/>
            <person name="Croucher N.J."/>
            <person name="Angiuoli S.V."/>
            <person name="Oggioni M."/>
            <person name="Dunning Hotopp J.C."/>
            <person name="Hu F.Z."/>
            <person name="Riley D.R."/>
            <person name="Covacci A."/>
            <person name="Mitchell T.J."/>
            <person name="Bentley S.D."/>
            <person name="Kilian M."/>
            <person name="Ehrlich G.D."/>
            <person name="Rappuoli R."/>
            <person name="Moxon E.R."/>
            <person name="Masignani V."/>
        </authorList>
    </citation>
    <scope>NUCLEOTIDE SEQUENCE [LARGE SCALE GENOMIC DNA]</scope>
    <source>
        <strain>Taiwan19F-14</strain>
    </source>
</reference>
<feature type="chain" id="PRO_1000193510" description="Peptide chain release factor 1">
    <location>
        <begin position="1"/>
        <end position="359"/>
    </location>
</feature>
<feature type="modified residue" description="N5-methylglutamine" evidence="1">
    <location>
        <position position="236"/>
    </location>
</feature>
<organism>
    <name type="scientific">Streptococcus pneumoniae (strain Taiwan19F-14)</name>
    <dbReference type="NCBI Taxonomy" id="487213"/>
    <lineage>
        <taxon>Bacteria</taxon>
        <taxon>Bacillati</taxon>
        <taxon>Bacillota</taxon>
        <taxon>Bacilli</taxon>
        <taxon>Lactobacillales</taxon>
        <taxon>Streptococcaceae</taxon>
        <taxon>Streptococcus</taxon>
    </lineage>
</organism>
<evidence type="ECO:0000255" key="1">
    <source>
        <dbReference type="HAMAP-Rule" id="MF_00093"/>
    </source>
</evidence>
<keyword id="KW-0963">Cytoplasm</keyword>
<keyword id="KW-0488">Methylation</keyword>
<keyword id="KW-0648">Protein biosynthesis</keyword>
<proteinExistence type="inferred from homology"/>